<accession>A7TIN0</accession>
<sequence>MLKIGRNLGIRAGSISRTRLLTMSNKLMLGSSCLSRRAYSAGSSSSNNEIPGFGKIALVGVIGTYIFYKAAQSIDRNKPKEYVSEDEYNNVMSGLKRRVSIFKPDEVEIHLSPIKDVTKVKRLFRDDKQMIYIDPAKLAEQVRQDPEDPYEPLLEELVKKHGTEAYYDHLPFGMAAMLTGRYMKENCKAGDRIVVYNFPLNIQEAIKFENEISILKDIVVYKDDQSIDGVVSYYKTVKKVQEI</sequence>
<reference key="1">
    <citation type="journal article" date="2007" name="Proc. Natl. Acad. Sci. U.S.A.">
        <title>Independent sorting-out of thousands of duplicated gene pairs in two yeast species descended from a whole-genome duplication.</title>
        <authorList>
            <person name="Scannell D.R."/>
            <person name="Frank A.C."/>
            <person name="Conant G.C."/>
            <person name="Byrne K.P."/>
            <person name="Woolfit M."/>
            <person name="Wolfe K.H."/>
        </authorList>
    </citation>
    <scope>NUCLEOTIDE SEQUENCE [LARGE SCALE GENOMIC DNA]</scope>
    <source>
        <strain>ATCC 22028 / DSM 70294 / BCRC 21397 / CBS 2163 / NBRC 10782 / NRRL Y-8283 / UCD 57-17</strain>
    </source>
</reference>
<proteinExistence type="inferred from homology"/>
<name>AIM36_VANPO</name>
<dbReference type="EMBL" id="DS480397">
    <property type="protein sequence ID" value="EDO17822.1"/>
    <property type="molecule type" value="Genomic_DNA"/>
</dbReference>
<dbReference type="RefSeq" id="XP_001645680.1">
    <property type="nucleotide sequence ID" value="XM_001645630.1"/>
</dbReference>
<dbReference type="FunCoup" id="A7TIN0">
    <property type="interactions" value="28"/>
</dbReference>
<dbReference type="GeneID" id="5546076"/>
<dbReference type="KEGG" id="vpo:Kpol_1043p12"/>
<dbReference type="eggNOG" id="ENOG502S2G9">
    <property type="taxonomic scope" value="Eukaryota"/>
</dbReference>
<dbReference type="HOGENOM" id="CLU_090420_0_0_1"/>
<dbReference type="InParanoid" id="A7TIN0"/>
<dbReference type="OMA" id="RVAIFPQ"/>
<dbReference type="OrthoDB" id="4081130at2759"/>
<dbReference type="PhylomeDB" id="A7TIN0"/>
<dbReference type="Proteomes" id="UP000000267">
    <property type="component" value="Unassembled WGS sequence"/>
</dbReference>
<dbReference type="GO" id="GO:0031966">
    <property type="term" value="C:mitochondrial membrane"/>
    <property type="evidence" value="ECO:0007669"/>
    <property type="project" value="UniProtKB-SubCell"/>
</dbReference>
<organism>
    <name type="scientific">Vanderwaltozyma polyspora (strain ATCC 22028 / DSM 70294 / BCRC 21397 / CBS 2163 / NBRC 10782 / NRRL Y-8283 / UCD 57-17)</name>
    <name type="common">Kluyveromyces polysporus</name>
    <dbReference type="NCBI Taxonomy" id="436907"/>
    <lineage>
        <taxon>Eukaryota</taxon>
        <taxon>Fungi</taxon>
        <taxon>Dikarya</taxon>
        <taxon>Ascomycota</taxon>
        <taxon>Saccharomycotina</taxon>
        <taxon>Saccharomycetes</taxon>
        <taxon>Saccharomycetales</taxon>
        <taxon>Saccharomycetaceae</taxon>
        <taxon>Vanderwaltozyma</taxon>
    </lineage>
</organism>
<protein>
    <recommendedName>
        <fullName>Altered inheritance of mitochondria protein 36, mitochondrial</fullName>
    </recommendedName>
    <alternativeName>
        <fullName>Found in mitochondria protein 39</fullName>
    </alternativeName>
</protein>
<keyword id="KW-0472">Membrane</keyword>
<keyword id="KW-0496">Mitochondrion</keyword>
<keyword id="KW-1185">Reference proteome</keyword>
<keyword id="KW-0809">Transit peptide</keyword>
<keyword id="KW-0812">Transmembrane</keyword>
<keyword id="KW-1133">Transmembrane helix</keyword>
<feature type="transit peptide" description="Mitochondrion" evidence="2">
    <location>
        <begin position="1"/>
        <end position="39"/>
    </location>
</feature>
<feature type="chain" id="PRO_0000399730" description="Altered inheritance of mitochondria protein 36, mitochondrial">
    <location>
        <begin position="40"/>
        <end position="243"/>
    </location>
</feature>
<feature type="transmembrane region" description="Helical" evidence="2">
    <location>
        <begin position="50"/>
        <end position="66"/>
    </location>
</feature>
<comment type="subcellular location">
    <subcellularLocation>
        <location evidence="1">Mitochondrion membrane</location>
        <topology evidence="1">Single-pass membrane protein</topology>
    </subcellularLocation>
</comment>
<comment type="similarity">
    <text evidence="3">Belongs to the AIM36 family.</text>
</comment>
<evidence type="ECO:0000250" key="1"/>
<evidence type="ECO:0000255" key="2"/>
<evidence type="ECO:0000305" key="3"/>
<gene>
    <name type="primary">AIM36</name>
    <name type="synonym">FMP39</name>
    <name type="ORF">Kpol_1043p12</name>
</gene>